<evidence type="ECO:0000255" key="1">
    <source>
        <dbReference type="HAMAP-Rule" id="MF_01185"/>
    </source>
</evidence>
<name>FLIW_GEOSW</name>
<organism>
    <name type="scientific">Geobacillus sp. (strain WCH70)</name>
    <dbReference type="NCBI Taxonomy" id="471223"/>
    <lineage>
        <taxon>Bacteria</taxon>
        <taxon>Bacillati</taxon>
        <taxon>Bacillota</taxon>
        <taxon>Bacilli</taxon>
        <taxon>Bacillales</taxon>
        <taxon>Anoxybacillaceae</taxon>
        <taxon>Geobacillus</taxon>
    </lineage>
</organism>
<keyword id="KW-1005">Bacterial flagellum biogenesis</keyword>
<keyword id="KW-0143">Chaperone</keyword>
<keyword id="KW-0963">Cytoplasm</keyword>
<keyword id="KW-0810">Translation regulation</keyword>
<accession>C5D7T5</accession>
<comment type="function">
    <text evidence="1">Acts as an anti-CsrA protein, binds CsrA and prevents it from repressing translation of its target genes, one of which is flagellin. Binds to flagellin and participates in the assembly of the flagellum.</text>
</comment>
<comment type="subunit">
    <text evidence="1">Interacts with translational regulator CsrA and flagellin(s).</text>
</comment>
<comment type="subcellular location">
    <subcellularLocation>
        <location evidence="1">Cytoplasm</location>
    </subcellularLocation>
</comment>
<comment type="similarity">
    <text evidence="1">Belongs to the FliW family.</text>
</comment>
<proteinExistence type="inferred from homology"/>
<reference key="1">
    <citation type="submission" date="2009-06" db="EMBL/GenBank/DDBJ databases">
        <title>Complete sequence of chromosome of Geopacillus sp. WCH70.</title>
        <authorList>
            <consortium name="US DOE Joint Genome Institute"/>
            <person name="Lucas S."/>
            <person name="Copeland A."/>
            <person name="Lapidus A."/>
            <person name="Glavina del Rio T."/>
            <person name="Dalin E."/>
            <person name="Tice H."/>
            <person name="Bruce D."/>
            <person name="Goodwin L."/>
            <person name="Pitluck S."/>
            <person name="Chertkov O."/>
            <person name="Brettin T."/>
            <person name="Detter J.C."/>
            <person name="Han C."/>
            <person name="Larimer F."/>
            <person name="Land M."/>
            <person name="Hauser L."/>
            <person name="Kyrpides N."/>
            <person name="Mikhailova N."/>
            <person name="Brumm P."/>
            <person name="Mead D.A."/>
            <person name="Richardson P."/>
        </authorList>
    </citation>
    <scope>NUCLEOTIDE SEQUENCE [LARGE SCALE GENOMIC DNA]</scope>
    <source>
        <strain>WCH70</strain>
    </source>
</reference>
<gene>
    <name evidence="1" type="primary">fliW</name>
    <name type="ordered locus">GWCH70_3027</name>
</gene>
<dbReference type="EMBL" id="CP001638">
    <property type="protein sequence ID" value="ACS25695.1"/>
    <property type="molecule type" value="Genomic_DNA"/>
</dbReference>
<dbReference type="SMR" id="C5D7T5"/>
<dbReference type="STRING" id="471223.GWCH70_3027"/>
<dbReference type="KEGG" id="gwc:GWCH70_3027"/>
<dbReference type="eggNOG" id="COG1699">
    <property type="taxonomic scope" value="Bacteria"/>
</dbReference>
<dbReference type="HOGENOM" id="CLU_112356_0_2_9"/>
<dbReference type="OrthoDB" id="9801235at2"/>
<dbReference type="GO" id="GO:0005737">
    <property type="term" value="C:cytoplasm"/>
    <property type="evidence" value="ECO:0007669"/>
    <property type="project" value="UniProtKB-SubCell"/>
</dbReference>
<dbReference type="GO" id="GO:0044780">
    <property type="term" value="P:bacterial-type flagellum assembly"/>
    <property type="evidence" value="ECO:0007669"/>
    <property type="project" value="UniProtKB-UniRule"/>
</dbReference>
<dbReference type="GO" id="GO:0006417">
    <property type="term" value="P:regulation of translation"/>
    <property type="evidence" value="ECO:0007669"/>
    <property type="project" value="UniProtKB-KW"/>
</dbReference>
<dbReference type="Gene3D" id="2.30.290.10">
    <property type="entry name" value="BH3618-like"/>
    <property type="match status" value="1"/>
</dbReference>
<dbReference type="HAMAP" id="MF_01185">
    <property type="entry name" value="FliW"/>
    <property type="match status" value="1"/>
</dbReference>
<dbReference type="InterPro" id="IPR003775">
    <property type="entry name" value="Flagellar_assembly_factor_FliW"/>
</dbReference>
<dbReference type="InterPro" id="IPR024046">
    <property type="entry name" value="Flagellar_assmbl_FliW_dom_sf"/>
</dbReference>
<dbReference type="NCBIfam" id="NF009793">
    <property type="entry name" value="PRK13285.1-1"/>
    <property type="match status" value="1"/>
</dbReference>
<dbReference type="PANTHER" id="PTHR39190">
    <property type="entry name" value="FLAGELLAR ASSEMBLY FACTOR FLIW"/>
    <property type="match status" value="1"/>
</dbReference>
<dbReference type="PANTHER" id="PTHR39190:SF1">
    <property type="entry name" value="FLAGELLAR ASSEMBLY FACTOR FLIW"/>
    <property type="match status" value="1"/>
</dbReference>
<dbReference type="Pfam" id="PF02623">
    <property type="entry name" value="FliW"/>
    <property type="match status" value="1"/>
</dbReference>
<dbReference type="SUPFAM" id="SSF141457">
    <property type="entry name" value="BH3618-like"/>
    <property type="match status" value="1"/>
</dbReference>
<sequence length="144" mass="16424">MKIATKYHGNIDIDEKDIVRFEQGIPGFLEEKQFVLLPLEDTPFIILQSVNTPALGFVLIEPFSYFPTYEIELDDNTLEQLQITGEQDVALYVILTVAEPFDDTTANLQAPIVINVNKRLGKQVILTNTNYKTKHRLFPEKVAK</sequence>
<protein>
    <recommendedName>
        <fullName evidence="1">Flagellar assembly factor FliW</fullName>
    </recommendedName>
</protein>
<feature type="chain" id="PRO_1000213777" description="Flagellar assembly factor FliW">
    <location>
        <begin position="1"/>
        <end position="144"/>
    </location>
</feature>